<dbReference type="EMBL" id="D16464">
    <property type="protein sequence ID" value="BAA03931.1"/>
    <property type="molecule type" value="Genomic_DNA"/>
</dbReference>
<dbReference type="EMBL" id="BC018375">
    <property type="protein sequence ID" value="AAH18375.1"/>
    <property type="molecule type" value="mRNA"/>
</dbReference>
<dbReference type="EMBL" id="BC051428">
    <property type="protein sequence ID" value="AAH51428.1"/>
    <property type="molecule type" value="mRNA"/>
</dbReference>
<dbReference type="CCDS" id="CCDS28098.1"/>
<dbReference type="PIR" id="A53336">
    <property type="entry name" value="A53336"/>
</dbReference>
<dbReference type="RefSeq" id="NP_001403657.1">
    <property type="nucleotide sequence ID" value="NM_001416728.1"/>
</dbReference>
<dbReference type="RefSeq" id="NP_001403658.1">
    <property type="nucleotide sequence ID" value="NM_001416729.1"/>
</dbReference>
<dbReference type="RefSeq" id="NP_032261.1">
    <property type="nucleotide sequence ID" value="NM_008235.3"/>
</dbReference>
<dbReference type="BMRB" id="P35428"/>
<dbReference type="SMR" id="P35428"/>
<dbReference type="BioGRID" id="200275">
    <property type="interactions" value="9"/>
</dbReference>
<dbReference type="ELM" id="P35428"/>
<dbReference type="FunCoup" id="P35428">
    <property type="interactions" value="1470"/>
</dbReference>
<dbReference type="STRING" id="10090.ENSMUSP00000023171"/>
<dbReference type="BindingDB" id="P35428"/>
<dbReference type="ChEMBL" id="CHEMBL1075292"/>
<dbReference type="GlyGen" id="P35428">
    <property type="glycosylation" value="2 sites"/>
</dbReference>
<dbReference type="iPTMnet" id="P35428"/>
<dbReference type="PhosphoSitePlus" id="P35428"/>
<dbReference type="PaxDb" id="10090-ENSMUSP00000023171"/>
<dbReference type="PeptideAtlas" id="P35428"/>
<dbReference type="ProteomicsDB" id="269593"/>
<dbReference type="Pumba" id="P35428"/>
<dbReference type="Antibodypedia" id="19442">
    <property type="antibodies" value="650 antibodies from 40 providers"/>
</dbReference>
<dbReference type="DNASU" id="15205"/>
<dbReference type="Ensembl" id="ENSMUST00000023171.8">
    <property type="protein sequence ID" value="ENSMUSP00000023171.8"/>
    <property type="gene ID" value="ENSMUSG00000022528.9"/>
</dbReference>
<dbReference type="GeneID" id="15205"/>
<dbReference type="KEGG" id="mmu:15205"/>
<dbReference type="UCSC" id="uc007ywl.1">
    <property type="organism name" value="mouse"/>
</dbReference>
<dbReference type="AGR" id="MGI:104853"/>
<dbReference type="CTD" id="3280"/>
<dbReference type="MGI" id="MGI:104853">
    <property type="gene designation" value="Hes1"/>
</dbReference>
<dbReference type="VEuPathDB" id="HostDB:ENSMUSG00000022528"/>
<dbReference type="eggNOG" id="KOG4304">
    <property type="taxonomic scope" value="Eukaryota"/>
</dbReference>
<dbReference type="GeneTree" id="ENSGT00940000159619"/>
<dbReference type="HOGENOM" id="CLU_068550_1_0_1"/>
<dbReference type="InParanoid" id="P35428"/>
<dbReference type="OMA" id="AMNYPAQ"/>
<dbReference type="OrthoDB" id="6085656at2759"/>
<dbReference type="PhylomeDB" id="P35428"/>
<dbReference type="TreeFam" id="TF351373"/>
<dbReference type="BioGRID-ORCS" id="15205">
    <property type="hits" value="5 hits in 79 CRISPR screens"/>
</dbReference>
<dbReference type="ChiTaRS" id="Hes1">
    <property type="organism name" value="mouse"/>
</dbReference>
<dbReference type="PRO" id="PR:P35428"/>
<dbReference type="Proteomes" id="UP000000589">
    <property type="component" value="Chromosome 16"/>
</dbReference>
<dbReference type="RNAct" id="P35428">
    <property type="molecule type" value="protein"/>
</dbReference>
<dbReference type="Bgee" id="ENSMUSG00000022528">
    <property type="expression patterns" value="Expressed in lip and 289 other cell types or tissues"/>
</dbReference>
<dbReference type="ExpressionAtlas" id="P35428">
    <property type="expression patterns" value="baseline and differential"/>
</dbReference>
<dbReference type="GO" id="GO:0000785">
    <property type="term" value="C:chromatin"/>
    <property type="evidence" value="ECO:0007669"/>
    <property type="project" value="Ensembl"/>
</dbReference>
<dbReference type="GO" id="GO:0005737">
    <property type="term" value="C:cytoplasm"/>
    <property type="evidence" value="ECO:0000314"/>
    <property type="project" value="MGI"/>
</dbReference>
<dbReference type="GO" id="GO:0016363">
    <property type="term" value="C:nuclear matrix"/>
    <property type="evidence" value="ECO:0007669"/>
    <property type="project" value="Ensembl"/>
</dbReference>
<dbReference type="GO" id="GO:0005654">
    <property type="term" value="C:nucleoplasm"/>
    <property type="evidence" value="ECO:0000304"/>
    <property type="project" value="Reactome"/>
</dbReference>
<dbReference type="GO" id="GO:0005634">
    <property type="term" value="C:nucleus"/>
    <property type="evidence" value="ECO:0000314"/>
    <property type="project" value="UniProtKB"/>
</dbReference>
<dbReference type="GO" id="GO:0032991">
    <property type="term" value="C:protein-containing complex"/>
    <property type="evidence" value="ECO:0000314"/>
    <property type="project" value="UniProtKB"/>
</dbReference>
<dbReference type="GO" id="GO:0003682">
    <property type="term" value="F:chromatin binding"/>
    <property type="evidence" value="ECO:0007669"/>
    <property type="project" value="Ensembl"/>
</dbReference>
<dbReference type="GO" id="GO:0003677">
    <property type="term" value="F:DNA binding"/>
    <property type="evidence" value="ECO:0000314"/>
    <property type="project" value="MGI"/>
</dbReference>
<dbReference type="GO" id="GO:0000981">
    <property type="term" value="F:DNA-binding transcription factor activity, RNA polymerase II-specific"/>
    <property type="evidence" value="ECO:0000314"/>
    <property type="project" value="MGI"/>
</dbReference>
<dbReference type="GO" id="GO:0001217">
    <property type="term" value="F:DNA-binding transcription repressor activity"/>
    <property type="evidence" value="ECO:0000314"/>
    <property type="project" value="UniProtKB"/>
</dbReference>
<dbReference type="GO" id="GO:0001227">
    <property type="term" value="F:DNA-binding transcription repressor activity, RNA polymerase II-specific"/>
    <property type="evidence" value="ECO:0000314"/>
    <property type="project" value="UniProtKB"/>
</dbReference>
<dbReference type="GO" id="GO:0070888">
    <property type="term" value="F:E-box binding"/>
    <property type="evidence" value="ECO:0000314"/>
    <property type="project" value="ARUK-UCL"/>
</dbReference>
<dbReference type="GO" id="GO:0042826">
    <property type="term" value="F:histone deacetylase binding"/>
    <property type="evidence" value="ECO:0007669"/>
    <property type="project" value="Ensembl"/>
</dbReference>
<dbReference type="GO" id="GO:0043398">
    <property type="term" value="F:HLH domain binding"/>
    <property type="evidence" value="ECO:0000314"/>
    <property type="project" value="UniProtKB"/>
</dbReference>
<dbReference type="GO" id="GO:0008432">
    <property type="term" value="F:JUN kinase binding"/>
    <property type="evidence" value="ECO:0007669"/>
    <property type="project" value="Ensembl"/>
</dbReference>
<dbReference type="GO" id="GO:0071820">
    <property type="term" value="F:N-box binding"/>
    <property type="evidence" value="ECO:0000314"/>
    <property type="project" value="UniProtKB"/>
</dbReference>
<dbReference type="GO" id="GO:0042803">
    <property type="term" value="F:protein homodimerization activity"/>
    <property type="evidence" value="ECO:0000314"/>
    <property type="project" value="UniProtKB"/>
</dbReference>
<dbReference type="GO" id="GO:0044877">
    <property type="term" value="F:protein-containing complex binding"/>
    <property type="evidence" value="ECO:0007669"/>
    <property type="project" value="Ensembl"/>
</dbReference>
<dbReference type="GO" id="GO:0051087">
    <property type="term" value="F:protein-folding chaperone binding"/>
    <property type="evidence" value="ECO:0000314"/>
    <property type="project" value="MGI"/>
</dbReference>
<dbReference type="GO" id="GO:0061629">
    <property type="term" value="F:RNA polymerase II-specific DNA-binding transcription factor binding"/>
    <property type="evidence" value="ECO:0000353"/>
    <property type="project" value="ARUK-UCL"/>
</dbReference>
<dbReference type="GO" id="GO:0043565">
    <property type="term" value="F:sequence-specific DNA binding"/>
    <property type="evidence" value="ECO:0000250"/>
    <property type="project" value="UniProtKB"/>
</dbReference>
<dbReference type="GO" id="GO:0001222">
    <property type="term" value="F:transcription corepressor binding"/>
    <property type="evidence" value="ECO:0007669"/>
    <property type="project" value="Ensembl"/>
</dbReference>
<dbReference type="GO" id="GO:0021984">
    <property type="term" value="P:adenohypophysis development"/>
    <property type="evidence" value="ECO:0000315"/>
    <property type="project" value="MGI"/>
</dbReference>
<dbReference type="GO" id="GO:0035881">
    <property type="term" value="P:amacrine cell differentiation"/>
    <property type="evidence" value="ECO:0000315"/>
    <property type="project" value="MGI"/>
</dbReference>
<dbReference type="GO" id="GO:0035909">
    <property type="term" value="P:aorta morphogenesis"/>
    <property type="evidence" value="ECO:0000315"/>
    <property type="project" value="BHF-UCL"/>
</dbReference>
<dbReference type="GO" id="GO:0048844">
    <property type="term" value="P:artery morphogenesis"/>
    <property type="evidence" value="ECO:0000315"/>
    <property type="project" value="BHF-UCL"/>
</dbReference>
<dbReference type="GO" id="GO:0035910">
    <property type="term" value="P:ascending aorta morphogenesis"/>
    <property type="evidence" value="ECO:0000315"/>
    <property type="project" value="BHF-UCL"/>
</dbReference>
<dbReference type="GO" id="GO:0030509">
    <property type="term" value="P:BMP signaling pathway"/>
    <property type="evidence" value="ECO:0000316"/>
    <property type="project" value="MGI"/>
</dbReference>
<dbReference type="GO" id="GO:0021870">
    <property type="term" value="P:Cajal-Retzius cell differentiation"/>
    <property type="evidence" value="ECO:0000316"/>
    <property type="project" value="MGI"/>
</dbReference>
<dbReference type="GO" id="GO:0061309">
    <property type="term" value="P:cardiac neural crest cell development involved in outflow tract morphogenesis"/>
    <property type="evidence" value="ECO:0000315"/>
    <property type="project" value="MGI"/>
</dbReference>
<dbReference type="GO" id="GO:0007155">
    <property type="term" value="P:cell adhesion"/>
    <property type="evidence" value="ECO:0000316"/>
    <property type="project" value="MGI"/>
</dbReference>
<dbReference type="GO" id="GO:0045165">
    <property type="term" value="P:cell fate commitment"/>
    <property type="evidence" value="ECO:0000315"/>
    <property type="project" value="MGI"/>
</dbReference>
<dbReference type="GO" id="GO:0001709">
    <property type="term" value="P:cell fate determination"/>
    <property type="evidence" value="ECO:0000315"/>
    <property type="project" value="MGI"/>
</dbReference>
<dbReference type="GO" id="GO:0048469">
    <property type="term" value="P:cell maturation"/>
    <property type="evidence" value="ECO:0000316"/>
    <property type="project" value="MGI"/>
</dbReference>
<dbReference type="GO" id="GO:0016477">
    <property type="term" value="P:cell migration"/>
    <property type="evidence" value="ECO:0000316"/>
    <property type="project" value="MGI"/>
</dbReference>
<dbReference type="GO" id="GO:0048667">
    <property type="term" value="P:cell morphogenesis involved in neuron differentiation"/>
    <property type="evidence" value="ECO:0000316"/>
    <property type="project" value="MGI"/>
</dbReference>
<dbReference type="GO" id="GO:0008283">
    <property type="term" value="P:cell population proliferation"/>
    <property type="evidence" value="ECO:0000315"/>
    <property type="project" value="MGI"/>
</dbReference>
<dbReference type="GO" id="GO:0071398">
    <property type="term" value="P:cellular response to fatty acid"/>
    <property type="evidence" value="ECO:0007669"/>
    <property type="project" value="Ensembl"/>
</dbReference>
<dbReference type="GO" id="GO:0071347">
    <property type="term" value="P:cellular response to interleukin-1"/>
    <property type="evidence" value="ECO:0007669"/>
    <property type="project" value="Ensembl"/>
</dbReference>
<dbReference type="GO" id="GO:1990090">
    <property type="term" value="P:cellular response to nerve growth factor stimulus"/>
    <property type="evidence" value="ECO:0007669"/>
    <property type="project" value="Ensembl"/>
</dbReference>
<dbReference type="GO" id="GO:0071356">
    <property type="term" value="P:cellular response to tumor necrosis factor"/>
    <property type="evidence" value="ECO:0007669"/>
    <property type="project" value="Ensembl"/>
</dbReference>
<dbReference type="GO" id="GO:0021953">
    <property type="term" value="P:central nervous system neuron differentiation"/>
    <property type="evidence" value="ECO:0000315"/>
    <property type="project" value="MGI"/>
</dbReference>
<dbReference type="GO" id="GO:0090102">
    <property type="term" value="P:cochlea development"/>
    <property type="evidence" value="ECO:0000315"/>
    <property type="project" value="MGI"/>
</dbReference>
<dbReference type="GO" id="GO:0072049">
    <property type="term" value="P:comma-shaped body morphogenesis"/>
    <property type="evidence" value="ECO:0000270"/>
    <property type="project" value="UniProtKB"/>
</dbReference>
<dbReference type="GO" id="GO:0061009">
    <property type="term" value="P:common bile duct development"/>
    <property type="evidence" value="ECO:0000315"/>
    <property type="project" value="MGI"/>
</dbReference>
<dbReference type="GO" id="GO:0003143">
    <property type="term" value="P:embryonic heart tube morphogenesis"/>
    <property type="evidence" value="ECO:0000315"/>
    <property type="project" value="BHF-UCL"/>
</dbReference>
<dbReference type="GO" id="GO:0090162">
    <property type="term" value="P:establishment of epithelial cell polarity"/>
    <property type="evidence" value="ECO:0000316"/>
    <property type="project" value="MGI"/>
</dbReference>
<dbReference type="GO" id="GO:0021861">
    <property type="term" value="P:forebrain radial glial cell differentiation"/>
    <property type="evidence" value="ECO:0000250"/>
    <property type="project" value="UniProtKB"/>
</dbReference>
<dbReference type="GO" id="GO:0072012">
    <property type="term" value="P:glomerulus vasculature development"/>
    <property type="evidence" value="ECO:0000270"/>
    <property type="project" value="UniProtKB"/>
</dbReference>
<dbReference type="GO" id="GO:0021575">
    <property type="term" value="P:hindbrain morphogenesis"/>
    <property type="evidence" value="ECO:0000316"/>
    <property type="project" value="MGI"/>
</dbReference>
<dbReference type="GO" id="GO:0001701">
    <property type="term" value="P:in utero embryonic development"/>
    <property type="evidence" value="ECO:0000316"/>
    <property type="project" value="MGI"/>
</dbReference>
<dbReference type="GO" id="GO:0002085">
    <property type="term" value="P:inhibition of neuroepithelial cell differentiation"/>
    <property type="evidence" value="ECO:0000315"/>
    <property type="project" value="MGI"/>
</dbReference>
<dbReference type="GO" id="GO:0042491">
    <property type="term" value="P:inner ear auditory receptor cell differentiation"/>
    <property type="evidence" value="ECO:0000316"/>
    <property type="project" value="MGI"/>
</dbReference>
<dbReference type="GO" id="GO:0060122">
    <property type="term" value="P:inner ear receptor cell stereocilium organization"/>
    <property type="evidence" value="ECO:0000316"/>
    <property type="project" value="MGI"/>
</dbReference>
<dbReference type="GO" id="GO:0060716">
    <property type="term" value="P:labyrinthine layer blood vessel development"/>
    <property type="evidence" value="ECO:0000315"/>
    <property type="project" value="BHF-UCL"/>
</dbReference>
<dbReference type="GO" id="GO:0046331">
    <property type="term" value="P:lateral inhibition"/>
    <property type="evidence" value="ECO:0000315"/>
    <property type="project" value="MGI"/>
</dbReference>
<dbReference type="GO" id="GO:0001889">
    <property type="term" value="P:liver development"/>
    <property type="evidence" value="ECO:0000315"/>
    <property type="project" value="MGI"/>
</dbReference>
<dbReference type="GO" id="GO:0030324">
    <property type="term" value="P:lung development"/>
    <property type="evidence" value="ECO:0000315"/>
    <property type="project" value="MGI"/>
</dbReference>
<dbReference type="GO" id="GO:0072282">
    <property type="term" value="P:metanephric nephron tubule morphogenesis"/>
    <property type="evidence" value="ECO:0000270"/>
    <property type="project" value="UniProtKB"/>
</dbReference>
<dbReference type="GO" id="GO:0030901">
    <property type="term" value="P:midbrain development"/>
    <property type="evidence" value="ECO:0000316"/>
    <property type="project" value="MGI"/>
</dbReference>
<dbReference type="GO" id="GO:0021555">
    <property type="term" value="P:midbrain-hindbrain boundary morphogenesis"/>
    <property type="evidence" value="ECO:0000316"/>
    <property type="project" value="MGI"/>
</dbReference>
<dbReference type="GO" id="GO:1902870">
    <property type="term" value="P:negative regulation of amacrine cell differentiation"/>
    <property type="evidence" value="ECO:0000315"/>
    <property type="project" value="MGI"/>
</dbReference>
<dbReference type="GO" id="GO:0090281">
    <property type="term" value="P:negative regulation of calcium ion import"/>
    <property type="evidence" value="ECO:0007669"/>
    <property type="project" value="Ensembl"/>
</dbReference>
<dbReference type="GO" id="GO:0045596">
    <property type="term" value="P:negative regulation of cell differentiation"/>
    <property type="evidence" value="ECO:0000315"/>
    <property type="project" value="MGI"/>
</dbReference>
<dbReference type="GO" id="GO:1905934">
    <property type="term" value="P:negative regulation of cell fate determination"/>
    <property type="evidence" value="ECO:0000315"/>
    <property type="project" value="MGI"/>
</dbReference>
<dbReference type="GO" id="GO:0045892">
    <property type="term" value="P:negative regulation of DNA-templated transcription"/>
    <property type="evidence" value="ECO:0000315"/>
    <property type="project" value="UniProtKB"/>
</dbReference>
<dbReference type="GO" id="GO:2000978">
    <property type="term" value="P:negative regulation of forebrain neuron differentiation"/>
    <property type="evidence" value="ECO:0000316"/>
    <property type="project" value="MGI"/>
</dbReference>
<dbReference type="GO" id="GO:0010629">
    <property type="term" value="P:negative regulation of gene expression"/>
    <property type="evidence" value="ECO:0007669"/>
    <property type="project" value="Ensembl"/>
</dbReference>
<dbReference type="GO" id="GO:0060253">
    <property type="term" value="P:negative regulation of glial cell proliferation"/>
    <property type="evidence" value="ECO:0000314"/>
    <property type="project" value="UniProtKB"/>
</dbReference>
<dbReference type="GO" id="GO:0045608">
    <property type="term" value="P:negative regulation of inner ear auditory receptor cell differentiation"/>
    <property type="evidence" value="ECO:0000315"/>
    <property type="project" value="MGI"/>
</dbReference>
<dbReference type="GO" id="GO:2000981">
    <property type="term" value="P:negative regulation of inner ear receptor cell differentiation"/>
    <property type="evidence" value="ECO:0000315"/>
    <property type="project" value="UniProtKB"/>
</dbReference>
<dbReference type="GO" id="GO:0045665">
    <property type="term" value="P:negative regulation of neuron differentiation"/>
    <property type="evidence" value="ECO:0000315"/>
    <property type="project" value="MGI"/>
</dbReference>
<dbReference type="GO" id="GO:0010977">
    <property type="term" value="P:negative regulation of neuron projection development"/>
    <property type="evidence" value="ECO:0007669"/>
    <property type="project" value="Ensembl"/>
</dbReference>
<dbReference type="GO" id="GO:0048715">
    <property type="term" value="P:negative regulation of oligodendrocyte differentiation"/>
    <property type="evidence" value="ECO:0000314"/>
    <property type="project" value="UniProtKB"/>
</dbReference>
<dbReference type="GO" id="GO:2000227">
    <property type="term" value="P:negative regulation of pancreatic A cell differentiation"/>
    <property type="evidence" value="ECO:0000315"/>
    <property type="project" value="MGI"/>
</dbReference>
<dbReference type="GO" id="GO:2000974">
    <property type="term" value="P:negative regulation of pro-B cell differentiation"/>
    <property type="evidence" value="ECO:0000250"/>
    <property type="project" value="UniProtKB"/>
</dbReference>
<dbReference type="GO" id="GO:2000737">
    <property type="term" value="P:negative regulation of stem cell differentiation"/>
    <property type="evidence" value="ECO:0007669"/>
    <property type="project" value="Ensembl"/>
</dbReference>
<dbReference type="GO" id="GO:0061106">
    <property type="term" value="P:negative regulation of stomach neuroendocrine cell differentiation"/>
    <property type="evidence" value="ECO:0000315"/>
    <property type="project" value="MGI"/>
</dbReference>
<dbReference type="GO" id="GO:0000122">
    <property type="term" value="P:negative regulation of transcription by RNA polymerase II"/>
    <property type="evidence" value="ECO:0000314"/>
    <property type="project" value="UniProtKB"/>
</dbReference>
<dbReference type="GO" id="GO:0021915">
    <property type="term" value="P:neural tube development"/>
    <property type="evidence" value="ECO:0000316"/>
    <property type="project" value="MGI"/>
</dbReference>
<dbReference type="GO" id="GO:0061101">
    <property type="term" value="P:neuroendocrine cell differentiation"/>
    <property type="evidence" value="ECO:0000315"/>
    <property type="project" value="MGI"/>
</dbReference>
<dbReference type="GO" id="GO:0030182">
    <property type="term" value="P:neuron differentiation"/>
    <property type="evidence" value="ECO:0000315"/>
    <property type="project" value="MGI"/>
</dbReference>
<dbReference type="GO" id="GO:0097150">
    <property type="term" value="P:neuronal stem cell population maintenance"/>
    <property type="evidence" value="ECO:0000315"/>
    <property type="project" value="UniProtKB"/>
</dbReference>
<dbReference type="GO" id="GO:0007219">
    <property type="term" value="P:Notch signaling pathway"/>
    <property type="evidence" value="ECO:0000314"/>
    <property type="project" value="MGI"/>
</dbReference>
<dbReference type="GO" id="GO:0021557">
    <property type="term" value="P:oculomotor nerve development"/>
    <property type="evidence" value="ECO:0000316"/>
    <property type="project" value="MGI"/>
</dbReference>
<dbReference type="GO" id="GO:0003151">
    <property type="term" value="P:outflow tract morphogenesis"/>
    <property type="evidence" value="ECO:0000315"/>
    <property type="project" value="BHF-UCL"/>
</dbReference>
<dbReference type="GO" id="GO:0031016">
    <property type="term" value="P:pancreas development"/>
    <property type="evidence" value="ECO:0000315"/>
    <property type="project" value="MGI"/>
</dbReference>
<dbReference type="GO" id="GO:0003310">
    <property type="term" value="P:pancreatic A cell differentiation"/>
    <property type="evidence" value="ECO:0000315"/>
    <property type="project" value="MGI"/>
</dbReference>
<dbReference type="GO" id="GO:0007389">
    <property type="term" value="P:pattern specification process"/>
    <property type="evidence" value="ECO:0000315"/>
    <property type="project" value="MGI"/>
</dbReference>
<dbReference type="GO" id="GO:0061626">
    <property type="term" value="P:pharyngeal arch artery morphogenesis"/>
    <property type="evidence" value="ECO:0000315"/>
    <property type="project" value="BHF-UCL"/>
</dbReference>
<dbReference type="GO" id="GO:0021983">
    <property type="term" value="P:pituitary gland development"/>
    <property type="evidence" value="ECO:0000315"/>
    <property type="project" value="MGI"/>
</dbReference>
<dbReference type="GO" id="GO:0048711">
    <property type="term" value="P:positive regulation of astrocyte differentiation"/>
    <property type="evidence" value="ECO:0000314"/>
    <property type="project" value="UniProtKB"/>
</dbReference>
<dbReference type="GO" id="GO:0030513">
    <property type="term" value="P:positive regulation of BMP signaling pathway"/>
    <property type="evidence" value="ECO:0000316"/>
    <property type="project" value="MGI"/>
</dbReference>
<dbReference type="GO" id="GO:0008284">
    <property type="term" value="P:positive regulation of cell population proliferation"/>
    <property type="evidence" value="ECO:0000315"/>
    <property type="project" value="BHF-UCL"/>
</dbReference>
<dbReference type="GO" id="GO:0043388">
    <property type="term" value="P:positive regulation of DNA binding"/>
    <property type="evidence" value="ECO:0000314"/>
    <property type="project" value="UniProtKB"/>
</dbReference>
<dbReference type="GO" id="GO:0045893">
    <property type="term" value="P:positive regulation of DNA-templated transcription"/>
    <property type="evidence" value="ECO:0000315"/>
    <property type="project" value="UniProtKB"/>
</dbReference>
<dbReference type="GO" id="GO:0010628">
    <property type="term" value="P:positive regulation of gene expression"/>
    <property type="evidence" value="ECO:0007669"/>
    <property type="project" value="Ensembl"/>
</dbReference>
<dbReference type="GO" id="GO:0045977">
    <property type="term" value="P:positive regulation of mitotic cell cycle, embryonic"/>
    <property type="evidence" value="ECO:0000315"/>
    <property type="project" value="BHF-UCL"/>
</dbReference>
<dbReference type="GO" id="GO:0045747">
    <property type="term" value="P:positive regulation of Notch signaling pathway"/>
    <property type="evidence" value="ECO:0000315"/>
    <property type="project" value="UniProtKB"/>
</dbReference>
<dbReference type="GO" id="GO:0046427">
    <property type="term" value="P:positive regulation of receptor signaling pathway via JAK-STAT"/>
    <property type="evidence" value="ECO:0000314"/>
    <property type="project" value="UniProtKB"/>
</dbReference>
<dbReference type="GO" id="GO:0042102">
    <property type="term" value="P:positive regulation of T cell proliferation"/>
    <property type="evidence" value="ECO:0000315"/>
    <property type="project" value="MGI"/>
</dbReference>
<dbReference type="GO" id="GO:0045944">
    <property type="term" value="P:positive regulation of transcription by RNA polymerase II"/>
    <property type="evidence" value="ECO:0000315"/>
    <property type="project" value="BHF-UCL"/>
</dbReference>
<dbReference type="GO" id="GO:0042531">
    <property type="term" value="P:positive regulation of tyrosine phosphorylation of STAT protein"/>
    <property type="evidence" value="ECO:0000314"/>
    <property type="project" value="UniProtKB"/>
</dbReference>
<dbReference type="GO" id="GO:0065003">
    <property type="term" value="P:protein-containing complex assembly"/>
    <property type="evidence" value="ECO:0000314"/>
    <property type="project" value="UniProtKB"/>
</dbReference>
<dbReference type="GO" id="GO:0050678">
    <property type="term" value="P:regulation of epithelial cell proliferation"/>
    <property type="evidence" value="ECO:0000316"/>
    <property type="project" value="MGI"/>
</dbReference>
<dbReference type="GO" id="GO:0045598">
    <property type="term" value="P:regulation of fat cell differentiation"/>
    <property type="evidence" value="ECO:0000315"/>
    <property type="project" value="MGI"/>
</dbReference>
<dbReference type="GO" id="GO:0050767">
    <property type="term" value="P:regulation of neurogenesis"/>
    <property type="evidence" value="ECO:0000316"/>
    <property type="project" value="MGI"/>
</dbReference>
<dbReference type="GO" id="GO:0045664">
    <property type="term" value="P:regulation of neuron differentiation"/>
    <property type="evidence" value="ECO:0000316"/>
    <property type="project" value="MGI"/>
</dbReference>
<dbReference type="GO" id="GO:0043254">
    <property type="term" value="P:regulation of protein-containing complex assembly"/>
    <property type="evidence" value="ECO:0007669"/>
    <property type="project" value="Ensembl"/>
</dbReference>
<dbReference type="GO" id="GO:0046425">
    <property type="term" value="P:regulation of receptor signaling pathway via JAK-STAT"/>
    <property type="evidence" value="ECO:0000314"/>
    <property type="project" value="UniProtKB"/>
</dbReference>
<dbReference type="GO" id="GO:0003266">
    <property type="term" value="P:regulation of secondary heart field cardioblast proliferation"/>
    <property type="evidence" value="ECO:0000315"/>
    <property type="project" value="MGI"/>
</dbReference>
<dbReference type="GO" id="GO:0048505">
    <property type="term" value="P:regulation of timing of cell differentiation"/>
    <property type="evidence" value="ECO:0000315"/>
    <property type="project" value="MGI"/>
</dbReference>
<dbReference type="GO" id="GO:0060164">
    <property type="term" value="P:regulation of timing of neuron differentiation"/>
    <property type="evidence" value="ECO:0000315"/>
    <property type="project" value="MGI"/>
</dbReference>
<dbReference type="GO" id="GO:0006357">
    <property type="term" value="P:regulation of transcription by RNA polymerase II"/>
    <property type="evidence" value="ECO:0000316"/>
    <property type="project" value="MGI"/>
</dbReference>
<dbReference type="GO" id="GO:0072141">
    <property type="term" value="P:renal interstitial fibroblast development"/>
    <property type="evidence" value="ECO:0000270"/>
    <property type="project" value="UniProtKB"/>
</dbReference>
<dbReference type="GO" id="GO:0043279">
    <property type="term" value="P:response to alkaloid"/>
    <property type="evidence" value="ECO:0007669"/>
    <property type="project" value="Ensembl"/>
</dbReference>
<dbReference type="GO" id="GO:0097066">
    <property type="term" value="P:response to thyroid hormone"/>
    <property type="evidence" value="ECO:0007669"/>
    <property type="project" value="Ensembl"/>
</dbReference>
<dbReference type="GO" id="GO:0009615">
    <property type="term" value="P:response to virus"/>
    <property type="evidence" value="ECO:0000314"/>
    <property type="project" value="MGI"/>
</dbReference>
<dbReference type="GO" id="GO:0072050">
    <property type="term" value="P:S-shaped body morphogenesis"/>
    <property type="evidence" value="ECO:0000270"/>
    <property type="project" value="UniProtKB"/>
</dbReference>
<dbReference type="GO" id="GO:0007224">
    <property type="term" value="P:smoothened signaling pathway"/>
    <property type="evidence" value="ECO:0000314"/>
    <property type="project" value="MGI"/>
</dbReference>
<dbReference type="GO" id="GO:0035019">
    <property type="term" value="P:somatic stem cell population maintenance"/>
    <property type="evidence" value="ECO:0000315"/>
    <property type="project" value="MGI"/>
</dbReference>
<dbReference type="GO" id="GO:0061102">
    <property type="term" value="P:stomach neuroendocrine cell differentiation"/>
    <property type="evidence" value="ECO:0000315"/>
    <property type="project" value="MGI"/>
</dbReference>
<dbReference type="GO" id="GO:0042098">
    <property type="term" value="P:T cell proliferation"/>
    <property type="evidence" value="ECO:0000315"/>
    <property type="project" value="MGI"/>
</dbReference>
<dbReference type="GO" id="GO:0021537">
    <property type="term" value="P:telencephalon development"/>
    <property type="evidence" value="ECO:0000315"/>
    <property type="project" value="MGI"/>
</dbReference>
<dbReference type="GO" id="GO:0048538">
    <property type="term" value="P:thymus development"/>
    <property type="evidence" value="ECO:0000315"/>
    <property type="project" value="BHF-UCL"/>
</dbReference>
<dbReference type="GO" id="GO:0021558">
    <property type="term" value="P:trochlear nerve development"/>
    <property type="evidence" value="ECO:0000316"/>
    <property type="project" value="MGI"/>
</dbReference>
<dbReference type="GO" id="GO:0060675">
    <property type="term" value="P:ureteric bud morphogenesis"/>
    <property type="evidence" value="ECO:0000270"/>
    <property type="project" value="UniProtKB"/>
</dbReference>
<dbReference type="GO" id="GO:0097084">
    <property type="term" value="P:vascular associated smooth muscle cell development"/>
    <property type="evidence" value="ECO:0000315"/>
    <property type="project" value="BHF-UCL"/>
</dbReference>
<dbReference type="GO" id="GO:0003281">
    <property type="term" value="P:ventricular septum development"/>
    <property type="evidence" value="ECO:0000315"/>
    <property type="project" value="BHF-UCL"/>
</dbReference>
<dbReference type="GO" id="GO:0060412">
    <property type="term" value="P:ventricular septum morphogenesis"/>
    <property type="evidence" value="ECO:0000315"/>
    <property type="project" value="BHF-UCL"/>
</dbReference>
<dbReference type="CDD" id="cd11459">
    <property type="entry name" value="bHLH-O_HES1_4"/>
    <property type="match status" value="1"/>
</dbReference>
<dbReference type="FunFam" id="4.10.280.10:FF:000009">
    <property type="entry name" value="Transcription factor HES-1"/>
    <property type="match status" value="1"/>
</dbReference>
<dbReference type="Gene3D" id="6.10.250.980">
    <property type="match status" value="1"/>
</dbReference>
<dbReference type="Gene3D" id="4.10.280.10">
    <property type="entry name" value="Helix-loop-helix DNA-binding domain"/>
    <property type="match status" value="1"/>
</dbReference>
<dbReference type="InterPro" id="IPR011598">
    <property type="entry name" value="bHLH_dom"/>
</dbReference>
<dbReference type="InterPro" id="IPR050370">
    <property type="entry name" value="HES_HEY"/>
</dbReference>
<dbReference type="InterPro" id="IPR036638">
    <property type="entry name" value="HLH_DNA-bd_sf"/>
</dbReference>
<dbReference type="InterPro" id="IPR003650">
    <property type="entry name" value="Orange_dom"/>
</dbReference>
<dbReference type="PANTHER" id="PTHR10985">
    <property type="entry name" value="BASIC HELIX-LOOP-HELIX TRANSCRIPTION FACTOR, HES-RELATED"/>
    <property type="match status" value="1"/>
</dbReference>
<dbReference type="Pfam" id="PF07527">
    <property type="entry name" value="Hairy_orange"/>
    <property type="match status" value="1"/>
</dbReference>
<dbReference type="Pfam" id="PF00010">
    <property type="entry name" value="HLH"/>
    <property type="match status" value="1"/>
</dbReference>
<dbReference type="SMART" id="SM00353">
    <property type="entry name" value="HLH"/>
    <property type="match status" value="1"/>
</dbReference>
<dbReference type="SMART" id="SM00511">
    <property type="entry name" value="ORANGE"/>
    <property type="match status" value="1"/>
</dbReference>
<dbReference type="SUPFAM" id="SSF47459">
    <property type="entry name" value="HLH, helix-loop-helix DNA-binding domain"/>
    <property type="match status" value="1"/>
</dbReference>
<dbReference type="SUPFAM" id="SSF158457">
    <property type="entry name" value="Orange domain-like"/>
    <property type="match status" value="1"/>
</dbReference>
<dbReference type="PROSITE" id="PS50888">
    <property type="entry name" value="BHLH"/>
    <property type="match status" value="1"/>
</dbReference>
<dbReference type="PROSITE" id="PS51054">
    <property type="entry name" value="ORANGE"/>
    <property type="match status" value="1"/>
</dbReference>
<sequence>MPADIMEKNSSSPVAATPASVNTTPDKPKTASEHRKSSKPIMEKRRRARINESLSQLKTLILDALKKDSSRHSKLEKADILEMTVKHLRNLQRAQMTAALSTDPSVLGKYRAGFSECMNEVTRFLSTCEGVNTEVRTRLLGHLANCMTQINAMTYPGQAHPALQAPPPPPPSGPAGPQHAPFAPPPPPLVPIPGGAAPPPGSAPCKLGSQAGEAAKVFGGFQVVPAPDGQFAFLIPNGAFAHSGPVIPVYTSNSGTSVGPNAVSPSSGSSLTSDSMWRPWRN</sequence>
<reference key="1">
    <citation type="journal article" date="1994" name="J. Biol. Chem.">
        <title>Structure, chromosomal locus, and promoter analysis of the gene encoding the mouse helix-loop-helix factor HES-1. Negative autoregulation through the multiple N box elements.</title>
        <authorList>
            <person name="Takebayashi K."/>
            <person name="Sasai Y."/>
            <person name="Sakai Y."/>
            <person name="Watanabe T."/>
            <person name="Nakanishi S."/>
            <person name="Kageyama R."/>
        </authorList>
    </citation>
    <scope>NUCLEOTIDE SEQUENCE [GENOMIC DNA]</scope>
</reference>
<reference key="2">
    <citation type="journal article" date="2004" name="Genome Res.">
        <title>The status, quality, and expansion of the NIH full-length cDNA project: the Mammalian Gene Collection (MGC).</title>
        <authorList>
            <consortium name="The MGC Project Team"/>
        </authorList>
    </citation>
    <scope>NUCLEOTIDE SEQUENCE [LARGE SCALE MRNA]</scope>
    <source>
        <strain>FVB/N</strain>
        <tissue>Colon</tissue>
        <tissue>Eye</tissue>
    </source>
</reference>
<reference key="3">
    <citation type="journal article" date="1998" name="Eur. J. Biochem.">
        <title>Transducin-like Enhancer of split 2, a mammalian homologue of Drosophila Groucho, acts as a transcriptional repressor, interacts with Hairy/Enhancer of split proteins, and is expressed during neuronal development.</title>
        <authorList>
            <person name="Grbavec D."/>
            <person name="Lo R."/>
            <person name="Liu Y."/>
            <person name="Stifani S."/>
        </authorList>
    </citation>
    <scope>INTERACTION WITH TLE1 AND TLE2</scope>
</reference>
<reference key="4">
    <citation type="journal article" date="2000" name="Development">
        <title>The bHLH gene Hes6, an inhibitor of Hes1, promotes neuronal differentiation.</title>
        <authorList>
            <person name="Bae S.-K."/>
            <person name="Bessho Y."/>
            <person name="Hojo M."/>
            <person name="Kageyama R."/>
        </authorList>
    </citation>
    <scope>DNA-BINDING</scope>
    <scope>INTERACTION WITH HES6</scope>
</reference>
<proteinExistence type="evidence at protein level"/>
<name>HES1_MOUSE</name>
<organism>
    <name type="scientific">Mus musculus</name>
    <name type="common">Mouse</name>
    <dbReference type="NCBI Taxonomy" id="10090"/>
    <lineage>
        <taxon>Eukaryota</taxon>
        <taxon>Metazoa</taxon>
        <taxon>Chordata</taxon>
        <taxon>Craniata</taxon>
        <taxon>Vertebrata</taxon>
        <taxon>Euteleostomi</taxon>
        <taxon>Mammalia</taxon>
        <taxon>Eutheria</taxon>
        <taxon>Euarchontoglires</taxon>
        <taxon>Glires</taxon>
        <taxon>Rodentia</taxon>
        <taxon>Myomorpha</taxon>
        <taxon>Muroidea</taxon>
        <taxon>Muridae</taxon>
        <taxon>Murinae</taxon>
        <taxon>Mus</taxon>
        <taxon>Mus</taxon>
    </lineage>
</organism>
<feature type="chain" id="PRO_0000127203" description="Transcription factor HES-1">
    <location>
        <begin position="1"/>
        <end position="282"/>
    </location>
</feature>
<feature type="domain" description="bHLH" evidence="3">
    <location>
        <begin position="34"/>
        <end position="91"/>
    </location>
</feature>
<feature type="domain" description="Orange" evidence="2">
    <location>
        <begin position="110"/>
        <end position="143"/>
    </location>
</feature>
<feature type="region of interest" description="Disordered" evidence="4">
    <location>
        <begin position="1"/>
        <end position="44"/>
    </location>
</feature>
<feature type="region of interest" description="Disordered" evidence="4">
    <location>
        <begin position="158"/>
        <end position="204"/>
    </location>
</feature>
<feature type="region of interest" description="Disordered" evidence="4">
    <location>
        <begin position="256"/>
        <end position="282"/>
    </location>
</feature>
<feature type="short sequence motif" description="WRPW motif">
    <location>
        <begin position="277"/>
        <end position="280"/>
    </location>
</feature>
<feature type="compositionally biased region" description="Low complexity" evidence="4">
    <location>
        <begin position="10"/>
        <end position="21"/>
    </location>
</feature>
<feature type="compositionally biased region" description="Basic and acidic residues" evidence="4">
    <location>
        <begin position="26"/>
        <end position="35"/>
    </location>
</feature>
<feature type="compositionally biased region" description="Pro residues" evidence="4">
    <location>
        <begin position="164"/>
        <end position="174"/>
    </location>
</feature>
<feature type="compositionally biased region" description="Pro residues" evidence="4">
    <location>
        <begin position="182"/>
        <end position="202"/>
    </location>
</feature>
<feature type="compositionally biased region" description="Low complexity" evidence="4">
    <location>
        <begin position="264"/>
        <end position="275"/>
    </location>
</feature>
<gene>
    <name type="primary">Hes1</name>
    <name type="synonym">Hes-1</name>
</gene>
<comment type="function">
    <text evidence="1">Transcriptional repressor of genes that require a bHLH protein for their transcription. May act as a negative regulator of myogenesis by inhibiting the functions of MYOD1 and ASH1 (By similarity). Binds DNA on N-box motifs: 5'-CACNAG-3' with high affinity and on E-box motifs: 5'-CANNTG-3' with low affinity. May play a role in a functional FA core complex response to DNA cross-link damage, being required for the stability and nuclear localization of FA core complex proteins, as well as for FANCD2 monoubiquitination in response to DNA damage (By similarity).</text>
</comment>
<comment type="subunit">
    <text evidence="1">Interacts with SIRT1 (By similarity). Transcription repression requires formation of a complex with a corepressor protein of the Groucho/TLE family. Interacts (via WPRW motif) with TLE1, and more weakly with TLE2. Interacts with HES6. Interacts with an FA complex, composed of FANCA, FANCF, FANCG and FANCL, but not of FANCC, nor FANCE (By similarity).</text>
</comment>
<comment type="subcellular location">
    <subcellularLocation>
        <location>Nucleus</location>
    </subcellularLocation>
</comment>
<comment type="tissue specificity">
    <text>Expressed at high levels in undifferentiated neural precursor cells, but the level of expression decreases as neural differentiation proceeds.</text>
</comment>
<comment type="domain">
    <text>Has a particular type of basic domain (presence of a helix-interrupting proline) that binds to the N-box (CACNAG), rather than the canonical E-box (CANNTG).</text>
</comment>
<comment type="domain">
    <text>The C-terminal WRPW motif is a transcriptional repression domain necessary for the interaction with Groucho/TLE family members, transcriptional corepressors recruited to specific target DNA by Hairy-related proteins.</text>
</comment>
<comment type="domain">
    <text evidence="1">The bHLH, as well as cooperation between the central Orange domain and the C-terminal WRPW motif, is required for transcriptional repressor activity.</text>
</comment>
<protein>
    <recommendedName>
        <fullName>Transcription factor HES-1</fullName>
    </recommendedName>
    <alternativeName>
        <fullName>Hairy and enhancer of split 1</fullName>
    </alternativeName>
</protein>
<evidence type="ECO:0000250" key="1"/>
<evidence type="ECO:0000255" key="2">
    <source>
        <dbReference type="PROSITE-ProRule" id="PRU00380"/>
    </source>
</evidence>
<evidence type="ECO:0000255" key="3">
    <source>
        <dbReference type="PROSITE-ProRule" id="PRU00981"/>
    </source>
</evidence>
<evidence type="ECO:0000256" key="4">
    <source>
        <dbReference type="SAM" id="MobiDB-lite"/>
    </source>
</evidence>
<keyword id="KW-0238">DNA-binding</keyword>
<keyword id="KW-0539">Nucleus</keyword>
<keyword id="KW-1185">Reference proteome</keyword>
<keyword id="KW-0678">Repressor</keyword>
<keyword id="KW-0804">Transcription</keyword>
<keyword id="KW-0805">Transcription regulation</keyword>
<accession>P35428</accession>